<proteinExistence type="inferred from homology"/>
<feature type="chain" id="PRO_0000123103" description="Small ribosomal subunit protein uS11">
    <location>
        <begin position="1"/>
        <end position="131"/>
    </location>
</feature>
<comment type="function">
    <text evidence="1">Located on the platform of the 30S subunit, it bridges several disparate RNA helices of the 16S rRNA. Forms part of the Shine-Dalgarno cleft in the 70S ribosome.</text>
</comment>
<comment type="subunit">
    <text evidence="1">Part of the 30S ribosomal subunit. Interacts with proteins S7 and S18. Binds to IF-3.</text>
</comment>
<comment type="similarity">
    <text evidence="1">Belongs to the universal ribosomal protein uS11 family.</text>
</comment>
<gene>
    <name evidence="1" type="primary">rpsK</name>
    <name type="ordered locus">BLi00160</name>
    <name type="ordered locus">BL01027</name>
</gene>
<dbReference type="EMBL" id="AE017333">
    <property type="protein sequence ID" value="AAU39134.1"/>
    <property type="molecule type" value="Genomic_DNA"/>
</dbReference>
<dbReference type="EMBL" id="CP000002">
    <property type="protein sequence ID" value="AAU21789.1"/>
    <property type="molecule type" value="Genomic_DNA"/>
</dbReference>
<dbReference type="RefSeq" id="WP_003178380.1">
    <property type="nucleotide sequence ID" value="NC_006322.1"/>
</dbReference>
<dbReference type="SMR" id="Q65P80"/>
<dbReference type="STRING" id="279010.BL01027"/>
<dbReference type="GeneID" id="92858876"/>
<dbReference type="KEGG" id="bld:BLi00160"/>
<dbReference type="KEGG" id="bli:BL01027"/>
<dbReference type="eggNOG" id="COG0100">
    <property type="taxonomic scope" value="Bacteria"/>
</dbReference>
<dbReference type="HOGENOM" id="CLU_072439_5_0_9"/>
<dbReference type="Proteomes" id="UP000000606">
    <property type="component" value="Chromosome"/>
</dbReference>
<dbReference type="GO" id="GO:1990904">
    <property type="term" value="C:ribonucleoprotein complex"/>
    <property type="evidence" value="ECO:0007669"/>
    <property type="project" value="UniProtKB-KW"/>
</dbReference>
<dbReference type="GO" id="GO:0005840">
    <property type="term" value="C:ribosome"/>
    <property type="evidence" value="ECO:0007669"/>
    <property type="project" value="UniProtKB-KW"/>
</dbReference>
<dbReference type="GO" id="GO:0019843">
    <property type="term" value="F:rRNA binding"/>
    <property type="evidence" value="ECO:0007669"/>
    <property type="project" value="UniProtKB-UniRule"/>
</dbReference>
<dbReference type="GO" id="GO:0003735">
    <property type="term" value="F:structural constituent of ribosome"/>
    <property type="evidence" value="ECO:0007669"/>
    <property type="project" value="InterPro"/>
</dbReference>
<dbReference type="GO" id="GO:0006412">
    <property type="term" value="P:translation"/>
    <property type="evidence" value="ECO:0007669"/>
    <property type="project" value="UniProtKB-UniRule"/>
</dbReference>
<dbReference type="FunFam" id="3.30.420.80:FF:000001">
    <property type="entry name" value="30S ribosomal protein S11"/>
    <property type="match status" value="1"/>
</dbReference>
<dbReference type="Gene3D" id="3.30.420.80">
    <property type="entry name" value="Ribosomal protein S11"/>
    <property type="match status" value="1"/>
</dbReference>
<dbReference type="HAMAP" id="MF_01310">
    <property type="entry name" value="Ribosomal_uS11"/>
    <property type="match status" value="1"/>
</dbReference>
<dbReference type="InterPro" id="IPR001971">
    <property type="entry name" value="Ribosomal_uS11"/>
</dbReference>
<dbReference type="InterPro" id="IPR019981">
    <property type="entry name" value="Ribosomal_uS11_bac-type"/>
</dbReference>
<dbReference type="InterPro" id="IPR018102">
    <property type="entry name" value="Ribosomal_uS11_CS"/>
</dbReference>
<dbReference type="InterPro" id="IPR036967">
    <property type="entry name" value="Ribosomal_uS11_sf"/>
</dbReference>
<dbReference type="NCBIfam" id="NF003698">
    <property type="entry name" value="PRK05309.1"/>
    <property type="match status" value="1"/>
</dbReference>
<dbReference type="NCBIfam" id="TIGR03632">
    <property type="entry name" value="uS11_bact"/>
    <property type="match status" value="1"/>
</dbReference>
<dbReference type="PANTHER" id="PTHR11759">
    <property type="entry name" value="40S RIBOSOMAL PROTEIN S14/30S RIBOSOMAL PROTEIN S11"/>
    <property type="match status" value="1"/>
</dbReference>
<dbReference type="Pfam" id="PF00411">
    <property type="entry name" value="Ribosomal_S11"/>
    <property type="match status" value="1"/>
</dbReference>
<dbReference type="PIRSF" id="PIRSF002131">
    <property type="entry name" value="Ribosomal_S11"/>
    <property type="match status" value="1"/>
</dbReference>
<dbReference type="SUPFAM" id="SSF53137">
    <property type="entry name" value="Translational machinery components"/>
    <property type="match status" value="1"/>
</dbReference>
<dbReference type="PROSITE" id="PS00054">
    <property type="entry name" value="RIBOSOMAL_S11"/>
    <property type="match status" value="1"/>
</dbReference>
<protein>
    <recommendedName>
        <fullName evidence="1">Small ribosomal subunit protein uS11</fullName>
    </recommendedName>
    <alternativeName>
        <fullName evidence="2">30S ribosomal protein S11</fullName>
    </alternativeName>
</protein>
<keyword id="KW-1185">Reference proteome</keyword>
<keyword id="KW-0687">Ribonucleoprotein</keyword>
<keyword id="KW-0689">Ribosomal protein</keyword>
<keyword id="KW-0694">RNA-binding</keyword>
<keyword id="KW-0699">rRNA-binding</keyword>
<reference key="1">
    <citation type="journal article" date="2004" name="J. Mol. Microbiol. Biotechnol.">
        <title>The complete genome sequence of Bacillus licheniformis DSM13, an organism with great industrial potential.</title>
        <authorList>
            <person name="Veith B."/>
            <person name="Herzberg C."/>
            <person name="Steckel S."/>
            <person name="Feesche J."/>
            <person name="Maurer K.H."/>
            <person name="Ehrenreich P."/>
            <person name="Baeumer S."/>
            <person name="Henne A."/>
            <person name="Liesegang H."/>
            <person name="Merkl R."/>
            <person name="Ehrenreich A."/>
            <person name="Gottschalk G."/>
        </authorList>
    </citation>
    <scope>NUCLEOTIDE SEQUENCE [LARGE SCALE GENOMIC DNA]</scope>
    <source>
        <strain>ATCC 14580 / DSM 13 / JCM 2505 / CCUG 7422 / NBRC 12200 / NCIMB 9375 / NCTC 10341 / NRRL NRS-1264 / Gibson 46</strain>
    </source>
</reference>
<reference key="2">
    <citation type="journal article" date="2004" name="Genome Biol.">
        <title>Complete genome sequence of the industrial bacterium Bacillus licheniformis and comparisons with closely related Bacillus species.</title>
        <authorList>
            <person name="Rey M.W."/>
            <person name="Ramaiya P."/>
            <person name="Nelson B.A."/>
            <person name="Brody-Karpin S.D."/>
            <person name="Zaretsky E.J."/>
            <person name="Tang M."/>
            <person name="Lopez de Leon A."/>
            <person name="Xiang H."/>
            <person name="Gusti V."/>
            <person name="Clausen I.G."/>
            <person name="Olsen P.B."/>
            <person name="Rasmussen M.D."/>
            <person name="Andersen J.T."/>
            <person name="Joergensen P.L."/>
            <person name="Larsen T.S."/>
            <person name="Sorokin A."/>
            <person name="Bolotin A."/>
            <person name="Lapidus A."/>
            <person name="Galleron N."/>
            <person name="Ehrlich S.D."/>
            <person name="Berka R.M."/>
        </authorList>
    </citation>
    <scope>NUCLEOTIDE SEQUENCE [LARGE SCALE GENOMIC DNA]</scope>
    <source>
        <strain>ATCC 14580 / DSM 13 / JCM 2505 / CCUG 7422 / NBRC 12200 / NCIMB 9375 / NCTC 10341 / NRRL NRS-1264 / Gibson 46</strain>
    </source>
</reference>
<evidence type="ECO:0000255" key="1">
    <source>
        <dbReference type="HAMAP-Rule" id="MF_01310"/>
    </source>
</evidence>
<evidence type="ECO:0000305" key="2"/>
<name>RS11_BACLD</name>
<organism>
    <name type="scientific">Bacillus licheniformis (strain ATCC 14580 / DSM 13 / JCM 2505 / CCUG 7422 / NBRC 12200 / NCIMB 9375 / NCTC 10341 / NRRL NRS-1264 / Gibson 46)</name>
    <dbReference type="NCBI Taxonomy" id="279010"/>
    <lineage>
        <taxon>Bacteria</taxon>
        <taxon>Bacillati</taxon>
        <taxon>Bacillota</taxon>
        <taxon>Bacilli</taxon>
        <taxon>Bacillales</taxon>
        <taxon>Bacillaceae</taxon>
        <taxon>Bacillus</taxon>
    </lineage>
</organism>
<accession>Q65P80</accession>
<accession>Q62ZL9</accession>
<sequence>MAAARKTNTRKRRVKKNIESGIAHIRSTFNNTIVTITDVHGNALSWSSAGALGFKGSKKSTPFAAQMAAETAAKGSIEHGLKTLEVTVKGPGSGREAAIRALQAAGLEVTAIRDVTPVPHNGCRPPKRRRV</sequence>